<name>ADC_STRNO</name>
<feature type="chain" id="PRO_0000207109" description="Acetoacetate decarboxylase">
    <location>
        <begin position="1"/>
        <end position="244"/>
    </location>
</feature>
<feature type="active site" description="Schiff-base intermediate with acetoacetate" evidence="1">
    <location>
        <position position="115"/>
    </location>
</feature>
<keyword id="KW-0210">Decarboxylase</keyword>
<keyword id="KW-0456">Lyase</keyword>
<keyword id="KW-0704">Schiff base</keyword>
<dbReference type="EC" id="4.1.1.4" evidence="1"/>
<dbReference type="EMBL" id="AF323753">
    <property type="protein sequence ID" value="AAG42848.1"/>
    <property type="molecule type" value="Genomic_DNA"/>
</dbReference>
<dbReference type="RefSeq" id="WP_344346045.1">
    <property type="nucleotide sequence ID" value="NZ_BAAASM010000002.1"/>
</dbReference>
<dbReference type="SMR" id="Q9EYI7"/>
<dbReference type="GO" id="GO:0047602">
    <property type="term" value="F:acetoacetate decarboxylase activity"/>
    <property type="evidence" value="ECO:0007669"/>
    <property type="project" value="UniProtKB-UniRule"/>
</dbReference>
<dbReference type="Gene3D" id="2.40.400.10">
    <property type="entry name" value="Acetoacetate decarboxylase-like"/>
    <property type="match status" value="1"/>
</dbReference>
<dbReference type="HAMAP" id="MF_00597">
    <property type="entry name" value="ADC"/>
    <property type="match status" value="1"/>
</dbReference>
<dbReference type="InterPro" id="IPR010451">
    <property type="entry name" value="Acetoacetate_decarboxylase"/>
</dbReference>
<dbReference type="InterPro" id="IPR023653">
    <property type="entry name" value="Acetoacetate_decarboxylase_bac"/>
</dbReference>
<dbReference type="InterPro" id="IPR023375">
    <property type="entry name" value="ADC_dom_sf"/>
</dbReference>
<dbReference type="NCBIfam" id="NF002614">
    <property type="entry name" value="PRK02265.1"/>
    <property type="match status" value="1"/>
</dbReference>
<dbReference type="Pfam" id="PF06314">
    <property type="entry name" value="ADC"/>
    <property type="match status" value="1"/>
</dbReference>
<dbReference type="SUPFAM" id="SSF160104">
    <property type="entry name" value="Acetoacetate decarboxylase-like"/>
    <property type="match status" value="1"/>
</dbReference>
<gene>
    <name evidence="1" type="primary">adc</name>
</gene>
<accession>Q9EYI7</accession>
<organism>
    <name type="scientific">Streptomyces nogalater</name>
    <dbReference type="NCBI Taxonomy" id="38314"/>
    <lineage>
        <taxon>Bacteria</taxon>
        <taxon>Bacillati</taxon>
        <taxon>Actinomycetota</taxon>
        <taxon>Actinomycetes</taxon>
        <taxon>Kitasatosporales</taxon>
        <taxon>Streptomycetaceae</taxon>
        <taxon>Streptomyces</taxon>
    </lineage>
</organism>
<evidence type="ECO:0000255" key="1">
    <source>
        <dbReference type="HAMAP-Rule" id="MF_00597"/>
    </source>
</evidence>
<reference key="1">
    <citation type="journal article" date="2001" name="Mol. Genet. Genomics">
        <title>The entire nogalamycin biosynthetic gene cluster of Streptomyces nogalater: characterization of a 20-kb DNA region and generation of hybrid structures.</title>
        <authorList>
            <person name="Torkkell S."/>
            <person name="Kunnari T."/>
            <person name="Palmu K."/>
            <person name="Maentsaelae P."/>
            <person name="Hakala J."/>
            <person name="Ylihonko K."/>
        </authorList>
    </citation>
    <scope>NUCLEOTIDE SEQUENCE [GENOMIC DNA]</scope>
    <source>
        <strain>ATCC 27451 / DSM 40546 / JCM 4553 / NBRC 13445 / NCIMB 9489 / VKM Ac-1290</strain>
    </source>
</reference>
<sequence length="244" mass="26988">MRAEDVVRAPSTPLDAPAFPAGPYRFTDREYLNITYRTDPEALRRVVPEPLRVAEPLVRFEVMRMPDVTGLGDYTEAGQLAVVEYEGEPGEYGISIHVDNFPAIASGREIGAFPKKAGRPRLYVDQDTLVGTLDHGTLPVARATMGYKHRPLNTEQAREELTRPTFMLKKLPHYDGSPRICELVRTQIADIVVKGAWSGPARLQLFAHALAPLADLPVLEVVSAAHVLTDLTLGRARVVHDYLA</sequence>
<protein>
    <recommendedName>
        <fullName evidence="1">Acetoacetate decarboxylase</fullName>
        <shortName evidence="1">AAD</shortName>
        <shortName evidence="1">ADC</shortName>
        <ecNumber evidence="1">4.1.1.4</ecNumber>
    </recommendedName>
</protein>
<proteinExistence type="inferred from homology"/>
<comment type="function">
    <text evidence="1">Catalyzes the conversion of acetoacetate to acetone and carbon dioxide.</text>
</comment>
<comment type="catalytic activity">
    <reaction evidence="1">
        <text>acetoacetate + H(+) = acetone + CO2</text>
        <dbReference type="Rhea" id="RHEA:19729"/>
        <dbReference type="ChEBI" id="CHEBI:13705"/>
        <dbReference type="ChEBI" id="CHEBI:15347"/>
        <dbReference type="ChEBI" id="CHEBI:15378"/>
        <dbReference type="ChEBI" id="CHEBI:16526"/>
        <dbReference type="EC" id="4.1.1.4"/>
    </reaction>
</comment>
<comment type="similarity">
    <text evidence="1">Belongs to the ADC family.</text>
</comment>